<comment type="function">
    <text>This plasmid-coded bactericidal protein is an endonuclease active on both single- and double-stranded DNA but with undefined specificity.</text>
</comment>
<comment type="function">
    <text>Colicins are polypeptide toxins produced by and active against E.coli and closely related bacteria.</text>
</comment>
<comment type="interaction">
    <interactant intactId="EBI-1035016">
        <id>Q47112</id>
    </interactant>
    <interactant intactId="EBI-1029882">
        <id>P13479</id>
        <label>imm</label>
    </interactant>
    <organismsDiffer>false</organismsDiffer>
    <experiments>3</experiments>
</comment>
<comment type="interaction">
    <interactant intactId="EBI-1035016">
        <id>Q47112</id>
    </interactant>
    <interactant intactId="EBI-1035025">
        <id>Q03708</id>
        <label>imm</label>
    </interactant>
    <organismsDiffer>false</organismsDiffer>
    <experiments>7</experiments>
</comment>
<comment type="similarity">
    <text evidence="2">Belongs to the colicin/pyosin nuclease family.</text>
</comment>
<dbReference type="EC" id="3.1.-.-"/>
<dbReference type="EMBL" id="M62409">
    <property type="protein sequence ID" value="AAA98054.1"/>
    <property type="molecule type" value="Genomic_DNA"/>
</dbReference>
<dbReference type="EMBL" id="X63620">
    <property type="protein sequence ID" value="CAA45164.1"/>
    <property type="molecule type" value="Genomic_DNA"/>
</dbReference>
<dbReference type="PIR" id="S22453">
    <property type="entry name" value="S22453"/>
</dbReference>
<dbReference type="RefSeq" id="WP_021530049.1">
    <property type="nucleotide sequence ID" value="NZ_WSXM01000092.1"/>
</dbReference>
<dbReference type="RefSeq" id="YP_009060493.1">
    <property type="nucleotide sequence ID" value="NC_024962.1"/>
</dbReference>
<dbReference type="PDB" id="1M08">
    <property type="method" value="X-ray"/>
    <property type="resolution" value="2.10 A"/>
    <property type="chains" value="A/B=447-576"/>
</dbReference>
<dbReference type="PDB" id="1MZ8">
    <property type="method" value="X-ray"/>
    <property type="resolution" value="2.00 A"/>
    <property type="chains" value="B/D=446-576"/>
</dbReference>
<dbReference type="PDB" id="1PT3">
    <property type="method" value="X-ray"/>
    <property type="resolution" value="2.50 A"/>
    <property type="chains" value="A/B=449-576"/>
</dbReference>
<dbReference type="PDB" id="1UJZ">
    <property type="method" value="X-ray"/>
    <property type="resolution" value="2.10 A"/>
    <property type="chains" value="B=446-573"/>
</dbReference>
<dbReference type="PDB" id="1ZNS">
    <property type="method" value="X-ray"/>
    <property type="resolution" value="2.50 A"/>
    <property type="chains" value="A=444-576"/>
</dbReference>
<dbReference type="PDB" id="1ZNV">
    <property type="method" value="X-ray"/>
    <property type="resolution" value="2.00 A"/>
    <property type="chains" value="B/D=444-576"/>
</dbReference>
<dbReference type="PDB" id="2AXC">
    <property type="method" value="X-ray"/>
    <property type="resolution" value="1.70 A"/>
    <property type="chains" value="A=60-316"/>
</dbReference>
<dbReference type="PDB" id="2ERH">
    <property type="method" value="X-ray"/>
    <property type="resolution" value="2.00 A"/>
    <property type="chains" value="B=447-573"/>
</dbReference>
<dbReference type="PDB" id="2IVH">
    <property type="method" value="X-ray"/>
    <property type="resolution" value="2.80 A"/>
    <property type="chains" value="A=449-576"/>
</dbReference>
<dbReference type="PDB" id="2JAZ">
    <property type="method" value="X-ray"/>
    <property type="resolution" value="2.03 A"/>
    <property type="chains" value="B/D=446-576"/>
</dbReference>
<dbReference type="PDB" id="2JB0">
    <property type="method" value="X-ray"/>
    <property type="resolution" value="1.91 A"/>
    <property type="chains" value="B=446-576"/>
</dbReference>
<dbReference type="PDB" id="2JBG">
    <property type="method" value="X-ray"/>
    <property type="resolution" value="2.20 A"/>
    <property type="chains" value="B/D=446-576"/>
</dbReference>
<dbReference type="PDB" id="3FBD">
    <property type="method" value="X-ray"/>
    <property type="resolution" value="2.90 A"/>
    <property type="chains" value="A/D=445-576"/>
</dbReference>
<dbReference type="PDB" id="3GJN">
    <property type="method" value="X-ray"/>
    <property type="resolution" value="2.48 A"/>
    <property type="chains" value="B/C=446-576"/>
</dbReference>
<dbReference type="PDB" id="3GKL">
    <property type="method" value="X-ray"/>
    <property type="resolution" value="2.20 A"/>
    <property type="chains" value="A/B=446-576"/>
</dbReference>
<dbReference type="PDB" id="3ZFK">
    <property type="method" value="X-ray"/>
    <property type="resolution" value="1.70 A"/>
    <property type="chains" value="A/B=450-573"/>
</dbReference>
<dbReference type="PDB" id="7CEI">
    <property type="method" value="X-ray"/>
    <property type="resolution" value="2.30 A"/>
    <property type="chains" value="B=371-576"/>
</dbReference>
<dbReference type="PDBsum" id="1M08"/>
<dbReference type="PDBsum" id="1MZ8"/>
<dbReference type="PDBsum" id="1PT3"/>
<dbReference type="PDBsum" id="1UJZ"/>
<dbReference type="PDBsum" id="1ZNS"/>
<dbReference type="PDBsum" id="1ZNV"/>
<dbReference type="PDBsum" id="2AXC"/>
<dbReference type="PDBsum" id="2ERH"/>
<dbReference type="PDBsum" id="2IVH"/>
<dbReference type="PDBsum" id="2JAZ"/>
<dbReference type="PDBsum" id="2JB0"/>
<dbReference type="PDBsum" id="2JBG"/>
<dbReference type="PDBsum" id="3FBD"/>
<dbReference type="PDBsum" id="3GJN"/>
<dbReference type="PDBsum" id="3GKL"/>
<dbReference type="PDBsum" id="3ZFK"/>
<dbReference type="PDBsum" id="7CEI"/>
<dbReference type="SMR" id="Q47112"/>
<dbReference type="DIP" id="DIP-16990N"/>
<dbReference type="IntAct" id="Q47112">
    <property type="interactions" value="2"/>
</dbReference>
<dbReference type="EvolutionaryTrace" id="Q47112"/>
<dbReference type="GO" id="GO:0005727">
    <property type="term" value="C:extrachromosomal circular DNA"/>
    <property type="evidence" value="ECO:0007669"/>
    <property type="project" value="InterPro"/>
</dbReference>
<dbReference type="GO" id="GO:0004519">
    <property type="term" value="F:endonuclease activity"/>
    <property type="evidence" value="ECO:0007669"/>
    <property type="project" value="UniProtKB-KW"/>
</dbReference>
<dbReference type="GO" id="GO:0046872">
    <property type="term" value="F:metal ion binding"/>
    <property type="evidence" value="ECO:0007669"/>
    <property type="project" value="UniProtKB-KW"/>
</dbReference>
<dbReference type="GO" id="GO:0042742">
    <property type="term" value="P:defense response to bacterium"/>
    <property type="evidence" value="ECO:0007669"/>
    <property type="project" value="UniProtKB-KW"/>
</dbReference>
<dbReference type="GO" id="GO:0031640">
    <property type="term" value="P:killing of cells of another organism"/>
    <property type="evidence" value="ECO:0007669"/>
    <property type="project" value="UniProtKB-KW"/>
</dbReference>
<dbReference type="Gene3D" id="3.90.540.10">
    <property type="entry name" value="Colicin/pyocin, DNase domain"/>
    <property type="match status" value="1"/>
</dbReference>
<dbReference type="Gene3D" id="1.10.287.620">
    <property type="entry name" value="Helix Hairpins"/>
    <property type="match status" value="1"/>
</dbReference>
<dbReference type="Gene3D" id="1.20.5.740">
    <property type="entry name" value="Single helix bin"/>
    <property type="match status" value="1"/>
</dbReference>
<dbReference type="InterPro" id="IPR024575">
    <property type="entry name" value="Cloacin_colicin"/>
</dbReference>
<dbReference type="InterPro" id="IPR037146">
    <property type="entry name" value="Colicin/pyocin_DNase_dom_sf"/>
</dbReference>
<dbReference type="InterPro" id="IPR024566">
    <property type="entry name" value="Colicin_R_dom"/>
</dbReference>
<dbReference type="InterPro" id="IPR044925">
    <property type="entry name" value="His-Me_finger_sf"/>
</dbReference>
<dbReference type="InterPro" id="IPR003615">
    <property type="entry name" value="HNH_nuc"/>
</dbReference>
<dbReference type="InterPro" id="IPR016128">
    <property type="entry name" value="Pyosin/cloacin_T_dom"/>
</dbReference>
<dbReference type="InterPro" id="IPR036302">
    <property type="entry name" value="Pyosin/cloacin_T_dom_sf"/>
</dbReference>
<dbReference type="Pfam" id="PF03515">
    <property type="entry name" value="Cloacin"/>
    <property type="match status" value="1"/>
</dbReference>
<dbReference type="Pfam" id="PF21431">
    <property type="entry name" value="Col-Pyo_DNase"/>
    <property type="match status" value="1"/>
</dbReference>
<dbReference type="Pfam" id="PF11570">
    <property type="entry name" value="E2R135"/>
    <property type="match status" value="1"/>
</dbReference>
<dbReference type="PRINTS" id="PR01295">
    <property type="entry name" value="CLOACIN"/>
</dbReference>
<dbReference type="SMART" id="SM00507">
    <property type="entry name" value="HNHc"/>
    <property type="match status" value="1"/>
</dbReference>
<dbReference type="SUPFAM" id="SSF69369">
    <property type="entry name" value="Cloacin translocation domain"/>
    <property type="match status" value="1"/>
</dbReference>
<dbReference type="SUPFAM" id="SSF69985">
    <property type="entry name" value="Colicin E3 receptor domain"/>
    <property type="match status" value="1"/>
</dbReference>
<dbReference type="SUPFAM" id="SSF54060">
    <property type="entry name" value="His-Me finger endonucleases"/>
    <property type="match status" value="1"/>
</dbReference>
<gene>
    <name type="primary">colE7</name>
    <name type="synonym">cea</name>
</gene>
<name>CEA7_ECOLX</name>
<reference key="1">
    <citation type="journal article" date="1992" name="Mol. Gen. Genet.">
        <title>Characterization of the cea gene of the ColE7 plasmid.</title>
        <authorList>
            <person name="Soong B.W."/>
            <person name="Lu F.M."/>
            <person name="Chak K.-F."/>
        </authorList>
    </citation>
    <scope>NUCLEOTIDE SEQUENCE [GENOMIC DNA]</scope>
    <source>
        <strain>K317</strain>
    </source>
</reference>
<reference key="2">
    <citation type="submission" date="1991-12" db="EMBL/GenBank/DDBJ databases">
        <title>Nucleotide sequence encoding the immunity and lysis proteins and the carboxyl-terminal peptides of colicins E4 and E7.</title>
        <authorList>
            <person name="Lau P.C.K."/>
            <person name="Parsons M."/>
        </authorList>
    </citation>
    <scope>NUCLEOTIDE SEQUENCE [GENOMIC DNA] OF 371-576</scope>
    <source>
        <strain>K317</strain>
    </source>
</reference>
<reference key="3">
    <citation type="journal article" date="1999" name="Structure">
        <title>The crystal structure of the DNase domain of colicin E7 in complex with its inhibitor Im7 protein.</title>
        <authorList>
            <person name="Ko T.P."/>
            <person name="Liao C.C."/>
            <person name="Ku W.-Y."/>
            <person name="Chak K.-F."/>
            <person name="Yuan H.S."/>
        </authorList>
    </citation>
    <scope>X-RAY CRYSTALLOGRAPHY (2.3 ANGSTROMS) OF 371-576</scope>
</reference>
<feature type="chain" id="PRO_0000218682" description="Colicin-E7">
    <location>
        <begin position="1"/>
        <end position="576"/>
    </location>
</feature>
<feature type="region of interest" description="Disordered" evidence="1">
    <location>
        <begin position="1"/>
        <end position="75"/>
    </location>
</feature>
<feature type="region of interest" description="Disordered" evidence="1">
    <location>
        <begin position="421"/>
        <end position="478"/>
    </location>
</feature>
<feature type="region of interest" description="Disordered" evidence="1">
    <location>
        <begin position="506"/>
        <end position="557"/>
    </location>
</feature>
<feature type="compositionally biased region" description="Gly residues" evidence="1">
    <location>
        <begin position="19"/>
        <end position="35"/>
    </location>
</feature>
<feature type="compositionally biased region" description="Low complexity" evidence="1">
    <location>
        <begin position="36"/>
        <end position="45"/>
    </location>
</feature>
<feature type="compositionally biased region" description="Gly residues" evidence="1">
    <location>
        <begin position="46"/>
        <end position="75"/>
    </location>
</feature>
<feature type="compositionally biased region" description="Basic and acidic residues" evidence="1">
    <location>
        <begin position="424"/>
        <end position="447"/>
    </location>
</feature>
<feature type="compositionally biased region" description="Basic and acidic residues" evidence="1">
    <location>
        <begin position="535"/>
        <end position="548"/>
    </location>
</feature>
<feature type="binding site">
    <location>
        <position position="544"/>
    </location>
    <ligand>
        <name>Zn(2+)</name>
        <dbReference type="ChEBI" id="CHEBI:29105"/>
    </ligand>
</feature>
<feature type="binding site">
    <location>
        <position position="569"/>
    </location>
    <ligand>
        <name>Zn(2+)</name>
        <dbReference type="ChEBI" id="CHEBI:29105"/>
    </ligand>
</feature>
<feature type="binding site">
    <location>
        <position position="573"/>
    </location>
    <ligand>
        <name>Zn(2+)</name>
        <dbReference type="ChEBI" id="CHEBI:29105"/>
    </ligand>
</feature>
<feature type="strand" evidence="4">
    <location>
        <begin position="89"/>
        <end position="91"/>
    </location>
</feature>
<feature type="strand" evidence="4">
    <location>
        <begin position="97"/>
        <end position="102"/>
    </location>
</feature>
<feature type="helix" evidence="4">
    <location>
        <begin position="109"/>
        <end position="116"/>
    </location>
</feature>
<feature type="strand" evidence="4">
    <location>
        <begin position="127"/>
        <end position="134"/>
    </location>
</feature>
<feature type="helix" evidence="4">
    <location>
        <begin position="136"/>
        <end position="142"/>
    </location>
</feature>
<feature type="strand" evidence="4">
    <location>
        <begin position="149"/>
        <end position="155"/>
    </location>
</feature>
<feature type="helix" evidence="4">
    <location>
        <begin position="156"/>
        <end position="158"/>
    </location>
</feature>
<feature type="helix" evidence="4">
    <location>
        <begin position="164"/>
        <end position="166"/>
    </location>
</feature>
<feature type="strand" evidence="4">
    <location>
        <begin position="173"/>
        <end position="177"/>
    </location>
</feature>
<feature type="strand" evidence="4">
    <location>
        <begin position="179"/>
        <end position="185"/>
    </location>
</feature>
<feature type="strand" evidence="4">
    <location>
        <begin position="188"/>
        <end position="197"/>
    </location>
</feature>
<feature type="strand" evidence="4">
    <location>
        <begin position="199"/>
        <end position="205"/>
    </location>
</feature>
<feature type="strand" evidence="4">
    <location>
        <begin position="214"/>
        <end position="219"/>
    </location>
</feature>
<feature type="strand" evidence="4">
    <location>
        <begin position="222"/>
        <end position="229"/>
    </location>
</feature>
<feature type="strand" evidence="4">
    <location>
        <begin position="243"/>
        <end position="245"/>
    </location>
</feature>
<feature type="turn" evidence="4">
    <location>
        <begin position="258"/>
        <end position="261"/>
    </location>
</feature>
<feature type="strand" evidence="4">
    <location>
        <begin position="262"/>
        <end position="268"/>
    </location>
</feature>
<feature type="helix" evidence="4">
    <location>
        <begin position="271"/>
        <end position="273"/>
    </location>
</feature>
<feature type="strand" evidence="4">
    <location>
        <begin position="278"/>
        <end position="284"/>
    </location>
</feature>
<feature type="helix" evidence="4">
    <location>
        <begin position="288"/>
        <end position="307"/>
    </location>
</feature>
<feature type="strand" evidence="6">
    <location>
        <begin position="447"/>
        <end position="449"/>
    </location>
</feature>
<feature type="strand" evidence="3">
    <location>
        <begin position="451"/>
        <end position="454"/>
    </location>
</feature>
<feature type="turn" evidence="7">
    <location>
        <begin position="462"/>
        <end position="469"/>
    </location>
</feature>
<feature type="helix" evidence="7">
    <location>
        <begin position="478"/>
        <end position="484"/>
    </location>
</feature>
<feature type="strand" evidence="7">
    <location>
        <begin position="488"/>
        <end position="491"/>
    </location>
</feature>
<feature type="helix" evidence="7">
    <location>
        <begin position="492"/>
        <end position="504"/>
    </location>
</feature>
<feature type="helix" evidence="7">
    <location>
        <begin position="507"/>
        <end position="510"/>
    </location>
</feature>
<feature type="helix" evidence="7">
    <location>
        <begin position="515"/>
        <end position="522"/>
    </location>
</feature>
<feature type="helix" evidence="7">
    <location>
        <begin position="531"/>
        <end position="533"/>
    </location>
</feature>
<feature type="strand" evidence="7">
    <location>
        <begin position="542"/>
        <end position="547"/>
    </location>
</feature>
<feature type="helix" evidence="7">
    <location>
        <begin position="549"/>
        <end position="551"/>
    </location>
</feature>
<feature type="strand" evidence="7">
    <location>
        <begin position="555"/>
        <end position="557"/>
    </location>
</feature>
<feature type="helix" evidence="7">
    <location>
        <begin position="558"/>
        <end position="560"/>
    </location>
</feature>
<feature type="strand" evidence="7">
    <location>
        <begin position="561"/>
        <end position="564"/>
    </location>
</feature>
<feature type="helix" evidence="7">
    <location>
        <begin position="566"/>
        <end position="572"/>
    </location>
</feature>
<feature type="turn" evidence="5">
    <location>
        <begin position="573"/>
        <end position="575"/>
    </location>
</feature>
<organism>
    <name type="scientific">Escherichia coli</name>
    <dbReference type="NCBI Taxonomy" id="562"/>
    <lineage>
        <taxon>Bacteria</taxon>
        <taxon>Pseudomonadati</taxon>
        <taxon>Pseudomonadota</taxon>
        <taxon>Gammaproteobacteria</taxon>
        <taxon>Enterobacterales</taxon>
        <taxon>Enterobacteriaceae</taxon>
        <taxon>Escherichia</taxon>
    </lineage>
</organism>
<accession>Q47112</accession>
<accession>Q51604</accession>
<geneLocation type="plasmid">
    <name>ColE7</name>
</geneLocation>
<protein>
    <recommendedName>
        <fullName>Colicin-E7</fullName>
        <ecNumber>3.1.-.-</ecNumber>
    </recommendedName>
</protein>
<evidence type="ECO:0000256" key="1">
    <source>
        <dbReference type="SAM" id="MobiDB-lite"/>
    </source>
</evidence>
<evidence type="ECO:0000305" key="2"/>
<evidence type="ECO:0007829" key="3">
    <source>
        <dbReference type="PDB" id="1ZNV"/>
    </source>
</evidence>
<evidence type="ECO:0007829" key="4">
    <source>
        <dbReference type="PDB" id="2AXC"/>
    </source>
</evidence>
<evidence type="ECO:0007829" key="5">
    <source>
        <dbReference type="PDB" id="2JAZ"/>
    </source>
</evidence>
<evidence type="ECO:0007829" key="6">
    <source>
        <dbReference type="PDB" id="3FBD"/>
    </source>
</evidence>
<evidence type="ECO:0007829" key="7">
    <source>
        <dbReference type="PDB" id="3ZFK"/>
    </source>
</evidence>
<keyword id="KW-0002">3D-structure</keyword>
<keyword id="KW-0044">Antibiotic</keyword>
<keyword id="KW-0929">Antimicrobial</keyword>
<keyword id="KW-0078">Bacteriocin</keyword>
<keyword id="KW-0255">Endonuclease</keyword>
<keyword id="KW-0378">Hydrolase</keyword>
<keyword id="KW-0479">Metal-binding</keyword>
<keyword id="KW-0540">Nuclease</keyword>
<keyword id="KW-0614">Plasmid</keyword>
<keyword id="KW-0862">Zinc</keyword>
<sequence>MSGGDGRGHNSGAHNTGGNINGGPTGLGGNGGASDGSGWSSENNPWGGGSGSGVHWGGGSGHGNGGGNSNSGGGSNSSVAAPMAFGFPALAAPGAGTLGISVSGEALSAAIADIFAALKGPFKFSAWGIALYGILPSEIAKDDPNMMSKIVTSLPAETVTNVQVSTLPLDQATVSVTKRVTDVVKDTRQHIAVVAGVPMSVPVVNAKPTRTPGVFHASFPGVPSLTVSTVKGLPVSTTLPRGITEDKGRTAVPAGFTFGGGSHEAVIRFPKESGQKPVYVSVTDVLTPAQVKQRQDEEKRLQQEWNDAHPVEVAERNYEQARAELNQANKDVARNQERQAKAVQVYNSRKSELDAANKTLADAKAEIKQFERFAREPMAAGHRMWQMAGLKAQRAQTDVNNKKAAFDAAAKEKSDADVALSSALERRKQKENKEKDAKAKLDKESKRNKPGKATGKGKPVNNKWLNNAGKDLGSPVPDRIANKLRDKEFKSFDDFRKKFWEEVSKDPELSKQFSRNNNDRMKVGKAPKTRTQDVSGKRTSFELHHEKPISQNGGVYDMDNISVVTPKRHIDIHRGK</sequence>
<proteinExistence type="evidence at protein level"/>